<evidence type="ECO:0000255" key="1">
    <source>
        <dbReference type="HAMAP-Rule" id="MF_00086"/>
    </source>
</evidence>
<evidence type="ECO:0000305" key="2"/>
<proteinExistence type="inferred from homology"/>
<comment type="function">
    <text evidence="1">Catalyzes the formation of S-adenosylmethionine (AdoMet) from methionine and ATP. The overall synthetic reaction is composed of two sequential steps, AdoMet formation and the subsequent tripolyphosphate hydrolysis which occurs prior to release of AdoMet from the enzyme.</text>
</comment>
<comment type="catalytic activity">
    <reaction evidence="1">
        <text>L-methionine + ATP + H2O = S-adenosyl-L-methionine + phosphate + diphosphate</text>
        <dbReference type="Rhea" id="RHEA:21080"/>
        <dbReference type="ChEBI" id="CHEBI:15377"/>
        <dbReference type="ChEBI" id="CHEBI:30616"/>
        <dbReference type="ChEBI" id="CHEBI:33019"/>
        <dbReference type="ChEBI" id="CHEBI:43474"/>
        <dbReference type="ChEBI" id="CHEBI:57844"/>
        <dbReference type="ChEBI" id="CHEBI:59789"/>
        <dbReference type="EC" id="2.5.1.6"/>
    </reaction>
</comment>
<comment type="cofactor">
    <cofactor evidence="1">
        <name>Mg(2+)</name>
        <dbReference type="ChEBI" id="CHEBI:18420"/>
    </cofactor>
    <text evidence="1">Binds 2 divalent ions per subunit.</text>
</comment>
<comment type="cofactor">
    <cofactor evidence="1">
        <name>K(+)</name>
        <dbReference type="ChEBI" id="CHEBI:29103"/>
    </cofactor>
    <text evidence="1">Binds 1 potassium ion per subunit.</text>
</comment>
<comment type="pathway">
    <text evidence="1">Amino-acid biosynthesis; S-adenosyl-L-methionine biosynthesis; S-adenosyl-L-methionine from L-methionine: step 1/1.</text>
</comment>
<comment type="subunit">
    <text evidence="1">Homotetramer; dimer of dimers.</text>
</comment>
<comment type="subcellular location">
    <subcellularLocation>
        <location evidence="1">Cytoplasm</location>
    </subcellularLocation>
</comment>
<comment type="similarity">
    <text evidence="1">Belongs to the AdoMet synthase family.</text>
</comment>
<comment type="sequence caution" evidence="2">
    <conflict type="erroneous initiation">
        <sequence resource="EMBL-CDS" id="AAS69955"/>
    </conflict>
</comment>
<reference key="1">
    <citation type="journal article" date="2004" name="J. Bacteriol.">
        <title>Comparative genomics of two Leptospira interrogans serovars reveals novel insights into physiology and pathogenesis.</title>
        <authorList>
            <person name="Nascimento A.L.T.O."/>
            <person name="Ko A.I."/>
            <person name="Martins E.A.L."/>
            <person name="Monteiro-Vitorello C.B."/>
            <person name="Ho P.L."/>
            <person name="Haake D.A."/>
            <person name="Verjovski-Almeida S."/>
            <person name="Hartskeerl R.A."/>
            <person name="Marques M.V."/>
            <person name="Oliveira M.C."/>
            <person name="Menck C.F.M."/>
            <person name="Leite L.C.C."/>
            <person name="Carrer H."/>
            <person name="Coutinho L.L."/>
            <person name="Degrave W.M."/>
            <person name="Dellagostin O.A."/>
            <person name="El-Dorry H."/>
            <person name="Ferro E.S."/>
            <person name="Ferro M.I.T."/>
            <person name="Furlan L.R."/>
            <person name="Gamberini M."/>
            <person name="Giglioti E.A."/>
            <person name="Goes-Neto A."/>
            <person name="Goldman G.H."/>
            <person name="Goldman M.H.S."/>
            <person name="Harakava R."/>
            <person name="Jeronimo S.M.B."/>
            <person name="Junqueira-de-Azevedo I.L.M."/>
            <person name="Kimura E.T."/>
            <person name="Kuramae E.E."/>
            <person name="Lemos E.G.M."/>
            <person name="Lemos M.V.F."/>
            <person name="Marino C.L."/>
            <person name="Nunes L.R."/>
            <person name="de Oliveira R.C."/>
            <person name="Pereira G.G."/>
            <person name="Reis M.S."/>
            <person name="Schriefer A."/>
            <person name="Siqueira W.J."/>
            <person name="Sommer P."/>
            <person name="Tsai S.M."/>
            <person name="Simpson A.J.G."/>
            <person name="Ferro J.A."/>
            <person name="Camargo L.E.A."/>
            <person name="Kitajima J.P."/>
            <person name="Setubal J.C."/>
            <person name="Van Sluys M.A."/>
        </authorList>
    </citation>
    <scope>NUCLEOTIDE SEQUENCE [LARGE SCALE GENOMIC DNA]</scope>
    <source>
        <strain>Fiocruz L1-130</strain>
    </source>
</reference>
<gene>
    <name evidence="1" type="primary">metK</name>
    <name type="ordered locus">LIC_11354</name>
</gene>
<dbReference type="EC" id="2.5.1.6" evidence="1"/>
<dbReference type="EMBL" id="AE016823">
    <property type="protein sequence ID" value="AAS69955.1"/>
    <property type="status" value="ALT_INIT"/>
    <property type="molecule type" value="Genomic_DNA"/>
</dbReference>
<dbReference type="RefSeq" id="WP_000053346.1">
    <property type="nucleotide sequence ID" value="NC_005823.1"/>
</dbReference>
<dbReference type="SMR" id="Q72SM5"/>
<dbReference type="GeneID" id="61144659"/>
<dbReference type="KEGG" id="lic:LIC_11354"/>
<dbReference type="HOGENOM" id="CLU_041802_1_1_12"/>
<dbReference type="UniPathway" id="UPA00315">
    <property type="reaction ID" value="UER00080"/>
</dbReference>
<dbReference type="Proteomes" id="UP000007037">
    <property type="component" value="Chromosome I"/>
</dbReference>
<dbReference type="GO" id="GO:0005737">
    <property type="term" value="C:cytoplasm"/>
    <property type="evidence" value="ECO:0007669"/>
    <property type="project" value="UniProtKB-SubCell"/>
</dbReference>
<dbReference type="GO" id="GO:0005524">
    <property type="term" value="F:ATP binding"/>
    <property type="evidence" value="ECO:0007669"/>
    <property type="project" value="UniProtKB-UniRule"/>
</dbReference>
<dbReference type="GO" id="GO:0000287">
    <property type="term" value="F:magnesium ion binding"/>
    <property type="evidence" value="ECO:0007669"/>
    <property type="project" value="UniProtKB-UniRule"/>
</dbReference>
<dbReference type="GO" id="GO:0004478">
    <property type="term" value="F:methionine adenosyltransferase activity"/>
    <property type="evidence" value="ECO:0007669"/>
    <property type="project" value="UniProtKB-UniRule"/>
</dbReference>
<dbReference type="GO" id="GO:0006730">
    <property type="term" value="P:one-carbon metabolic process"/>
    <property type="evidence" value="ECO:0007669"/>
    <property type="project" value="UniProtKB-KW"/>
</dbReference>
<dbReference type="GO" id="GO:0006556">
    <property type="term" value="P:S-adenosylmethionine biosynthetic process"/>
    <property type="evidence" value="ECO:0007669"/>
    <property type="project" value="UniProtKB-UniRule"/>
</dbReference>
<dbReference type="CDD" id="cd18079">
    <property type="entry name" value="S-AdoMet_synt"/>
    <property type="match status" value="1"/>
</dbReference>
<dbReference type="FunFam" id="3.30.300.10:FF:000003">
    <property type="entry name" value="S-adenosylmethionine synthase"/>
    <property type="match status" value="1"/>
</dbReference>
<dbReference type="Gene3D" id="3.30.300.10">
    <property type="match status" value="3"/>
</dbReference>
<dbReference type="HAMAP" id="MF_00086">
    <property type="entry name" value="S_AdoMet_synth1"/>
    <property type="match status" value="1"/>
</dbReference>
<dbReference type="InterPro" id="IPR022631">
    <property type="entry name" value="ADOMET_SYNTHASE_CS"/>
</dbReference>
<dbReference type="InterPro" id="IPR022630">
    <property type="entry name" value="S-AdoMet_synt_C"/>
</dbReference>
<dbReference type="InterPro" id="IPR022629">
    <property type="entry name" value="S-AdoMet_synt_central"/>
</dbReference>
<dbReference type="InterPro" id="IPR022628">
    <property type="entry name" value="S-AdoMet_synt_N"/>
</dbReference>
<dbReference type="InterPro" id="IPR002133">
    <property type="entry name" value="S-AdoMet_synthetase"/>
</dbReference>
<dbReference type="InterPro" id="IPR022636">
    <property type="entry name" value="S-AdoMet_synthetase_sfam"/>
</dbReference>
<dbReference type="NCBIfam" id="TIGR01034">
    <property type="entry name" value="metK"/>
    <property type="match status" value="1"/>
</dbReference>
<dbReference type="PANTHER" id="PTHR11964">
    <property type="entry name" value="S-ADENOSYLMETHIONINE SYNTHETASE"/>
    <property type="match status" value="1"/>
</dbReference>
<dbReference type="Pfam" id="PF02773">
    <property type="entry name" value="S-AdoMet_synt_C"/>
    <property type="match status" value="1"/>
</dbReference>
<dbReference type="Pfam" id="PF02772">
    <property type="entry name" value="S-AdoMet_synt_M"/>
    <property type="match status" value="1"/>
</dbReference>
<dbReference type="Pfam" id="PF00438">
    <property type="entry name" value="S-AdoMet_synt_N"/>
    <property type="match status" value="1"/>
</dbReference>
<dbReference type="PIRSF" id="PIRSF000497">
    <property type="entry name" value="MAT"/>
    <property type="match status" value="1"/>
</dbReference>
<dbReference type="SUPFAM" id="SSF55973">
    <property type="entry name" value="S-adenosylmethionine synthetase"/>
    <property type="match status" value="3"/>
</dbReference>
<dbReference type="PROSITE" id="PS00376">
    <property type="entry name" value="ADOMET_SYNTHASE_1"/>
    <property type="match status" value="1"/>
</dbReference>
<dbReference type="PROSITE" id="PS00377">
    <property type="entry name" value="ADOMET_SYNTHASE_2"/>
    <property type="match status" value="1"/>
</dbReference>
<accession>Q72SM5</accession>
<name>METK_LEPIC</name>
<protein>
    <recommendedName>
        <fullName evidence="1">S-adenosylmethionine synthase</fullName>
        <shortName evidence="1">AdoMet synthase</shortName>
        <ecNumber evidence="1">2.5.1.6</ecNumber>
    </recommendedName>
    <alternativeName>
        <fullName evidence="1">MAT</fullName>
    </alternativeName>
    <alternativeName>
        <fullName evidence="1">Methionine adenosyltransferase</fullName>
    </alternativeName>
</protein>
<feature type="chain" id="PRO_0000174541" description="S-adenosylmethionine synthase">
    <location>
        <begin position="1"/>
        <end position="386"/>
    </location>
</feature>
<feature type="region of interest" description="Flexible loop" evidence="1">
    <location>
        <begin position="101"/>
        <end position="111"/>
    </location>
</feature>
<feature type="binding site" description="in other chain" evidence="1">
    <location>
        <position position="17"/>
    </location>
    <ligand>
        <name>ATP</name>
        <dbReference type="ChEBI" id="CHEBI:30616"/>
        <note>ligand shared between two neighboring subunits</note>
    </ligand>
</feature>
<feature type="binding site" evidence="1">
    <location>
        <position position="19"/>
    </location>
    <ligand>
        <name>Mg(2+)</name>
        <dbReference type="ChEBI" id="CHEBI:18420"/>
    </ligand>
</feature>
<feature type="binding site" evidence="1">
    <location>
        <position position="45"/>
    </location>
    <ligand>
        <name>K(+)</name>
        <dbReference type="ChEBI" id="CHEBI:29103"/>
    </ligand>
</feature>
<feature type="binding site" description="in other chain" evidence="1">
    <location>
        <position position="58"/>
    </location>
    <ligand>
        <name>L-methionine</name>
        <dbReference type="ChEBI" id="CHEBI:57844"/>
        <note>ligand shared between two neighboring subunits</note>
    </ligand>
</feature>
<feature type="binding site" description="in other chain" evidence="1">
    <location>
        <position position="101"/>
    </location>
    <ligand>
        <name>L-methionine</name>
        <dbReference type="ChEBI" id="CHEBI:57844"/>
        <note>ligand shared between two neighboring subunits</note>
    </ligand>
</feature>
<feature type="binding site" description="in other chain" evidence="1">
    <location>
        <begin position="168"/>
        <end position="170"/>
    </location>
    <ligand>
        <name>ATP</name>
        <dbReference type="ChEBI" id="CHEBI:30616"/>
        <note>ligand shared between two neighboring subunits</note>
    </ligand>
</feature>
<feature type="binding site" evidence="1">
    <location>
        <position position="242"/>
    </location>
    <ligand>
        <name>ATP</name>
        <dbReference type="ChEBI" id="CHEBI:30616"/>
        <note>ligand shared between two neighboring subunits</note>
    </ligand>
</feature>
<feature type="binding site" evidence="1">
    <location>
        <position position="242"/>
    </location>
    <ligand>
        <name>L-methionine</name>
        <dbReference type="ChEBI" id="CHEBI:57844"/>
        <note>ligand shared between two neighboring subunits</note>
    </ligand>
</feature>
<feature type="binding site" description="in other chain" evidence="1">
    <location>
        <begin position="248"/>
        <end position="249"/>
    </location>
    <ligand>
        <name>ATP</name>
        <dbReference type="ChEBI" id="CHEBI:30616"/>
        <note>ligand shared between two neighboring subunits</note>
    </ligand>
</feature>
<feature type="binding site" evidence="1">
    <location>
        <position position="265"/>
    </location>
    <ligand>
        <name>ATP</name>
        <dbReference type="ChEBI" id="CHEBI:30616"/>
        <note>ligand shared between two neighboring subunits</note>
    </ligand>
</feature>
<feature type="binding site" evidence="1">
    <location>
        <position position="269"/>
    </location>
    <ligand>
        <name>ATP</name>
        <dbReference type="ChEBI" id="CHEBI:30616"/>
        <note>ligand shared between two neighboring subunits</note>
    </ligand>
</feature>
<feature type="binding site" description="in other chain" evidence="1">
    <location>
        <position position="273"/>
    </location>
    <ligand>
        <name>L-methionine</name>
        <dbReference type="ChEBI" id="CHEBI:57844"/>
        <note>ligand shared between two neighboring subunits</note>
    </ligand>
</feature>
<keyword id="KW-0067">ATP-binding</keyword>
<keyword id="KW-0963">Cytoplasm</keyword>
<keyword id="KW-0460">Magnesium</keyword>
<keyword id="KW-0479">Metal-binding</keyword>
<keyword id="KW-0547">Nucleotide-binding</keyword>
<keyword id="KW-0554">One-carbon metabolism</keyword>
<keyword id="KW-0630">Potassium</keyword>
<keyword id="KW-0808">Transferase</keyword>
<organism>
    <name type="scientific">Leptospira interrogans serogroup Icterohaemorrhagiae serovar copenhageni (strain Fiocruz L1-130)</name>
    <dbReference type="NCBI Taxonomy" id="267671"/>
    <lineage>
        <taxon>Bacteria</taxon>
        <taxon>Pseudomonadati</taxon>
        <taxon>Spirochaetota</taxon>
        <taxon>Spirochaetia</taxon>
        <taxon>Leptospirales</taxon>
        <taxon>Leptospiraceae</taxon>
        <taxon>Leptospira</taxon>
    </lineage>
</organism>
<sequence>MSLKDFIFTSESVGEGHPDKVCDQISDAVLDAYLEQDPKSRVACETLVTTNLVVIAGEITSKGKVDAQEIARNVIRDIGYNDITMGFDADFAVVSAHVHAQSPDISQGVTEGEGLFKEQGAGDQGLMFGFAINETPELMPMPIYYSHELVKHLAGLRHGNKLKFLRPDAKSQVTVEYKDGKPVRIDTVVISTQHSPDVTHKQIEEALIEECIKKVIPANLLNNTKYFINPTGQFIIGGPHGDAGLTGRKIIVDTYGGYGRHGGGAFSGKDPSKVDRSAAYMGRYIAKNVVASGLADKCEVQLAYAIGVAEPVSVHVDTFGTGKISEEELVKRIRANFKLTPRGIIESLKLLEKGRKYRETASYGHFGRKGSTFTWEETDKASALKG</sequence>